<name>LCNM_LACLL</name>
<reference key="1">
    <citation type="journal article" date="2001" name="FEMS Microbiol. Lett.">
        <title>Lactococcin MMFII, a novel class IIa bacteriocin produced by Lactococcus lactis MMFII, isolated from a Tunisian dairy product.</title>
        <authorList>
            <person name="Ferchichi M."/>
            <person name="Frere J."/>
            <person name="Mabrouk K."/>
            <person name="Manai M."/>
        </authorList>
    </citation>
    <scope>PROTEIN SEQUENCE</scope>
    <scope>FUNCTION</scope>
    <scope>MASS SPECTROMETRY</scope>
    <source>
        <strain>MMFII</strain>
    </source>
</reference>
<reference key="2">
    <citation type="journal article" date="2001" name="Biochem. Biophys. Res. Commun.">
        <title>Chemical synthesis, molecular modeling, and antimicrobial activity of a novel bacteriocin, MMFII.</title>
        <authorList>
            <person name="Ferchichi M."/>
            <person name="Fathallah M."/>
            <person name="Mansuelle P."/>
            <person name="Rochat H."/>
            <person name="Sabatier J.-M."/>
            <person name="Manai M."/>
            <person name="Mabrouk K."/>
        </authorList>
    </citation>
    <scope>SYNTHESIS</scope>
    <scope>3D-STRUCTURE MODELING</scope>
    <source>
        <strain>MMFII</strain>
    </source>
</reference>
<protein>
    <recommendedName>
        <fullName>Bacteriocin lactococcin MMFII</fullName>
    </recommendedName>
</protein>
<sequence>TSYGNGVHCNKSKCWIDVSELETYKAGTVSNPKDILW</sequence>
<accession>P83002</accession>
<dbReference type="SMR" id="P83002"/>
<dbReference type="TCDB" id="1.C.24.1.14">
    <property type="family name" value="the pediocin (pediocin) family"/>
</dbReference>
<dbReference type="GO" id="GO:0005576">
    <property type="term" value="C:extracellular region"/>
    <property type="evidence" value="ECO:0007669"/>
    <property type="project" value="UniProtKB-SubCell"/>
</dbReference>
<dbReference type="GO" id="GO:0042742">
    <property type="term" value="P:defense response to bacterium"/>
    <property type="evidence" value="ECO:0007669"/>
    <property type="project" value="UniProtKB-KW"/>
</dbReference>
<dbReference type="GO" id="GO:0031640">
    <property type="term" value="P:killing of cells of another organism"/>
    <property type="evidence" value="ECO:0007669"/>
    <property type="project" value="UniProtKB-KW"/>
</dbReference>
<dbReference type="Gene3D" id="1.20.5.130">
    <property type="match status" value="1"/>
</dbReference>
<dbReference type="InterPro" id="IPR002633">
    <property type="entry name" value="Bacteriocin_IIa"/>
</dbReference>
<dbReference type="InterPro" id="IPR023384">
    <property type="entry name" value="Bacteriocin_IIa_CS"/>
</dbReference>
<dbReference type="InterPro" id="IPR023388">
    <property type="entry name" value="Bacteriocin_IIa_dom_sf"/>
</dbReference>
<dbReference type="Pfam" id="PF01721">
    <property type="entry name" value="Bacteriocin_II"/>
    <property type="match status" value="1"/>
</dbReference>
<dbReference type="PROSITE" id="PS60030">
    <property type="entry name" value="BACTERIOCIN_IIA"/>
    <property type="match status" value="1"/>
</dbReference>
<keyword id="KW-0044">Antibiotic</keyword>
<keyword id="KW-0929">Antimicrobial</keyword>
<keyword id="KW-0078">Bacteriocin</keyword>
<keyword id="KW-0903">Direct protein sequencing</keyword>
<keyword id="KW-1015">Disulfide bond</keyword>
<keyword id="KW-0964">Secreted</keyword>
<comment type="function">
    <text evidence="1">Bacteriocin active against Listeria monocytogenes and Lactococcus cremoris.</text>
</comment>
<comment type="subcellular location">
    <subcellularLocation>
        <location>Secreted</location>
    </subcellularLocation>
</comment>
<comment type="mass spectrometry"/>
<comment type="similarity">
    <text evidence="2">Belongs to the bacteriocin class IIA/YGNGV family.</text>
</comment>
<proteinExistence type="evidence at protein level"/>
<evidence type="ECO:0000269" key="1">
    <source>
    </source>
</evidence>
<evidence type="ECO:0000305" key="2"/>
<feature type="peptide" id="PRO_0000044637" description="Bacteriocin lactococcin MMFII">
    <location>
        <begin position="1"/>
        <end position="37"/>
    </location>
</feature>
<feature type="disulfide bond">
    <location>
        <begin position="9"/>
        <end position="14"/>
    </location>
</feature>
<organism>
    <name type="scientific">Lactococcus lactis subsp. lactis</name>
    <name type="common">Streptococcus lactis</name>
    <dbReference type="NCBI Taxonomy" id="1360"/>
    <lineage>
        <taxon>Bacteria</taxon>
        <taxon>Bacillati</taxon>
        <taxon>Bacillota</taxon>
        <taxon>Bacilli</taxon>
        <taxon>Lactobacillales</taxon>
        <taxon>Streptococcaceae</taxon>
        <taxon>Lactococcus</taxon>
    </lineage>
</organism>